<feature type="chain" id="PRO_0000351289" description="Autoinducer 2 import ATP-binding protein LsrA">
    <location>
        <begin position="1"/>
        <end position="495"/>
    </location>
</feature>
<feature type="domain" description="ABC transporter 1" evidence="2">
    <location>
        <begin position="5"/>
        <end position="233"/>
    </location>
</feature>
<feature type="domain" description="ABC transporter 2" evidence="2">
    <location>
        <begin position="256"/>
        <end position="494"/>
    </location>
</feature>
<feature type="binding site" evidence="2">
    <location>
        <begin position="37"/>
        <end position="44"/>
    </location>
    <ligand>
        <name>ATP</name>
        <dbReference type="ChEBI" id="CHEBI:30616"/>
    </ligand>
</feature>
<accession>A4WER4</accession>
<comment type="function">
    <text evidence="1">Part of the ABC transporter complex LsrABCD involved in autoinducer 2 (AI-2) import. Responsible for energy coupling to the transport system.</text>
</comment>
<comment type="catalytic activity">
    <reaction evidence="1">
        <text>ATP + H2O + (2R,4S)-2-methyl-2,3,3,4-tetrahydroxytetrahydrofuran-[AI-2-binding protein]Side 1 = ADP + phosphate + (2R,4S)-2-methyl-2,3,3,4-tetrahydroxytetrahydrofuranSide 2 + [AI-2-binding protein]Side 1.</text>
        <dbReference type="EC" id="7.6.2.13"/>
    </reaction>
</comment>
<comment type="subunit">
    <text evidence="1">The complex is composed of two ATP-binding proteins (LsrA), two transmembrane proteins (LsrC and LsrD) and a solute-binding protein (LsrB).</text>
</comment>
<comment type="subcellular location">
    <subcellularLocation>
        <location evidence="1">Cell inner membrane</location>
        <topology evidence="1">Peripheral membrane protein</topology>
    </subcellularLocation>
</comment>
<comment type="similarity">
    <text evidence="3">Belongs to the ABC transporter superfamily. AI-2 autoinducer porter (TC 3.A.1.2.8) family.</text>
</comment>
<evidence type="ECO:0000250" key="1">
    <source>
        <dbReference type="UniProtKB" id="P77257"/>
    </source>
</evidence>
<evidence type="ECO:0000255" key="2">
    <source>
        <dbReference type="PROSITE-ProRule" id="PRU00434"/>
    </source>
</evidence>
<evidence type="ECO:0000305" key="3"/>
<dbReference type="EC" id="7.6.2.13" evidence="1"/>
<dbReference type="EMBL" id="CP000653">
    <property type="protein sequence ID" value="ABP62194.1"/>
    <property type="molecule type" value="Genomic_DNA"/>
</dbReference>
<dbReference type="RefSeq" id="WP_015960520.1">
    <property type="nucleotide sequence ID" value="NC_009436.1"/>
</dbReference>
<dbReference type="SMR" id="A4WER4"/>
<dbReference type="STRING" id="399742.Ent638_3536"/>
<dbReference type="KEGG" id="ent:Ent638_3536"/>
<dbReference type="eggNOG" id="COG1129">
    <property type="taxonomic scope" value="Bacteria"/>
</dbReference>
<dbReference type="HOGENOM" id="CLU_000604_92_3_6"/>
<dbReference type="OrthoDB" id="9805029at2"/>
<dbReference type="Proteomes" id="UP000000230">
    <property type="component" value="Chromosome"/>
</dbReference>
<dbReference type="GO" id="GO:0005886">
    <property type="term" value="C:plasma membrane"/>
    <property type="evidence" value="ECO:0007669"/>
    <property type="project" value="UniProtKB-SubCell"/>
</dbReference>
<dbReference type="GO" id="GO:0005524">
    <property type="term" value="F:ATP binding"/>
    <property type="evidence" value="ECO:0007669"/>
    <property type="project" value="UniProtKB-KW"/>
</dbReference>
<dbReference type="GO" id="GO:0016887">
    <property type="term" value="F:ATP hydrolysis activity"/>
    <property type="evidence" value="ECO:0007669"/>
    <property type="project" value="InterPro"/>
</dbReference>
<dbReference type="CDD" id="cd03216">
    <property type="entry name" value="ABC_Carb_Monos_I"/>
    <property type="match status" value="1"/>
</dbReference>
<dbReference type="CDD" id="cd03215">
    <property type="entry name" value="ABC_Carb_Monos_II"/>
    <property type="match status" value="1"/>
</dbReference>
<dbReference type="Gene3D" id="3.40.50.300">
    <property type="entry name" value="P-loop containing nucleotide triphosphate hydrolases"/>
    <property type="match status" value="2"/>
</dbReference>
<dbReference type="InterPro" id="IPR003593">
    <property type="entry name" value="AAA+_ATPase"/>
</dbReference>
<dbReference type="InterPro" id="IPR050107">
    <property type="entry name" value="ABC_carbohydrate_import_ATPase"/>
</dbReference>
<dbReference type="InterPro" id="IPR003439">
    <property type="entry name" value="ABC_transporter-like_ATP-bd"/>
</dbReference>
<dbReference type="InterPro" id="IPR017871">
    <property type="entry name" value="ABC_transporter-like_CS"/>
</dbReference>
<dbReference type="InterPro" id="IPR027417">
    <property type="entry name" value="P-loop_NTPase"/>
</dbReference>
<dbReference type="NCBIfam" id="NF011967">
    <property type="entry name" value="PRK15439.1"/>
    <property type="match status" value="1"/>
</dbReference>
<dbReference type="PANTHER" id="PTHR43790:SF2">
    <property type="entry name" value="AUTOINDUCER 2 IMPORT ATP-BINDING PROTEIN LSRA"/>
    <property type="match status" value="1"/>
</dbReference>
<dbReference type="PANTHER" id="PTHR43790">
    <property type="entry name" value="CARBOHYDRATE TRANSPORT ATP-BINDING PROTEIN MG119-RELATED"/>
    <property type="match status" value="1"/>
</dbReference>
<dbReference type="Pfam" id="PF00005">
    <property type="entry name" value="ABC_tran"/>
    <property type="match status" value="2"/>
</dbReference>
<dbReference type="SMART" id="SM00382">
    <property type="entry name" value="AAA"/>
    <property type="match status" value="2"/>
</dbReference>
<dbReference type="SUPFAM" id="SSF52540">
    <property type="entry name" value="P-loop containing nucleoside triphosphate hydrolases"/>
    <property type="match status" value="2"/>
</dbReference>
<dbReference type="PROSITE" id="PS00211">
    <property type="entry name" value="ABC_TRANSPORTER_1"/>
    <property type="match status" value="1"/>
</dbReference>
<dbReference type="PROSITE" id="PS50893">
    <property type="entry name" value="ABC_TRANSPORTER_2"/>
    <property type="match status" value="2"/>
</dbReference>
<protein>
    <recommendedName>
        <fullName evidence="1">Autoinducer 2 import ATP-binding protein LsrA</fullName>
        <shortName evidence="1">AI-2 import ATP-binding protein LsrA</shortName>
        <ecNumber evidence="1">7.6.2.13</ecNumber>
    </recommendedName>
</protein>
<organism>
    <name type="scientific">Enterobacter sp. (strain 638)</name>
    <dbReference type="NCBI Taxonomy" id="399742"/>
    <lineage>
        <taxon>Bacteria</taxon>
        <taxon>Pseudomonadati</taxon>
        <taxon>Pseudomonadota</taxon>
        <taxon>Gammaproteobacteria</taxon>
        <taxon>Enterobacterales</taxon>
        <taxon>Enterobacteriaceae</taxon>
        <taxon>Enterobacter</taxon>
    </lineage>
</organism>
<sequence>MTVLIEAHGIHKQFSGVPVLRGIDFTLLSGQVHALMGGNGAGKSTLMKIIAGVETPDSGELNVEGKPFARLKPGQAHQLGIYLVPQEPMLFPNLTVRENILFRLPRGNDPEKRLADKLQQLQCQLNLDAAASTLEVADQQMVEILRGLMRDAKILILDEPTASLTPGETERLFRQIRALQDLGVGIVFISHKLPEIRQLASHVSVMRDGAVVLSGETTQFDDTALITAMTPVSREQGLSDTQKLWLALPGNRRTQAQDFPVLRVEDLTGEGFIDLSLEIYAGEIVGLAGLVGSGRTEFAETLYGLRPTRGGRIWLENQEIGEDSVLTRLEKGLVYLPEDRQVSGLFLDAPIRWNTVALNEPSLWQQRKREAAVVERYHRALGIKLNHPDQIVRTLSGGNQQKVLLARCLEANPLLLIVDEPTRGVDVSARADIYQLIKSVAAQNVAVLMISSDLDEFPGLADRVLVMHQGMFSGELPRHAVSLDRMMALAFGGQS</sequence>
<reference key="1">
    <citation type="journal article" date="2010" name="PLoS Genet.">
        <title>Genome sequence of the plant growth promoting endophytic bacterium Enterobacter sp. 638.</title>
        <authorList>
            <person name="Taghavi S."/>
            <person name="van der Lelie D."/>
            <person name="Hoffman A."/>
            <person name="Zhang Y.B."/>
            <person name="Walla M.D."/>
            <person name="Vangronsveld J."/>
            <person name="Newman L."/>
            <person name="Monchy S."/>
        </authorList>
    </citation>
    <scope>NUCLEOTIDE SEQUENCE [LARGE SCALE GENOMIC DNA]</scope>
    <source>
        <strain>638</strain>
    </source>
</reference>
<gene>
    <name type="primary">lsrA</name>
    <name type="ordered locus">Ent638_3536</name>
</gene>
<name>LSRA_ENT38</name>
<keyword id="KW-0067">ATP-binding</keyword>
<keyword id="KW-0997">Cell inner membrane</keyword>
<keyword id="KW-1003">Cell membrane</keyword>
<keyword id="KW-0472">Membrane</keyword>
<keyword id="KW-0547">Nucleotide-binding</keyword>
<keyword id="KW-0677">Repeat</keyword>
<keyword id="KW-1278">Translocase</keyword>
<keyword id="KW-0813">Transport</keyword>
<proteinExistence type="inferred from homology"/>